<organism evidence="12">
    <name type="scientific">Anopheles gambiae</name>
    <name type="common">African malaria mosquito</name>
    <dbReference type="NCBI Taxonomy" id="7165"/>
    <lineage>
        <taxon>Eukaryota</taxon>
        <taxon>Metazoa</taxon>
        <taxon>Ecdysozoa</taxon>
        <taxon>Arthropoda</taxon>
        <taxon>Hexapoda</taxon>
        <taxon>Insecta</taxon>
        <taxon>Pterygota</taxon>
        <taxon>Neoptera</taxon>
        <taxon>Endopterygota</taxon>
        <taxon>Diptera</taxon>
        <taxon>Nematocera</taxon>
        <taxon>Culicoidea</taxon>
        <taxon>Culicidae</taxon>
        <taxon>Anophelinae</taxon>
        <taxon>Anopheles</taxon>
    </lineage>
</organism>
<comment type="function">
    <text evidence="6">Cleaves adenosine triphosphate (ATP) and adenosine diphosphate (ADP) to adenosine monophosphate (AMP) and inorganic phosphate (PubMed:39294191). Enhances fibrin degradation in the midgut blood bolus (PubMed:39294191). Activates human tissue plasminogen activator (PLAT), probably via an allosteric activation mechanism (PubMed:39294191). Inhibits ADP-mediated host platelet aggregation in vitro and in mosquito midgut (PubMed:39294191). Inhibits host neutrophil activation in the mosquito midgut: reduces neutrophil extracellular traps formation in the presence of platelets and the formation of total cell- and mitochondrial-derived reactive oxygen species (PubMed:39294191).</text>
</comment>
<comment type="function">
    <text evidence="6">(Microbial infection) Promotes Plasmodium berghei parasite transmission from the mammalian host to the mosquito probably by reducing the blood bolus viscosity (PubMed:39294191). Facilitates sporozoite transmission from the mosquito to the mammalian host during blood feeding (PubMed:39294191).</text>
</comment>
<comment type="catalytic activity">
    <reaction evidence="6">
        <text>a ribonucleoside 5'-triphosphate + 2 H2O = a ribonucleoside 5'-phosphate + 2 phosphate + 2 H(+)</text>
        <dbReference type="Rhea" id="RHEA:36795"/>
        <dbReference type="ChEBI" id="CHEBI:15377"/>
        <dbReference type="ChEBI" id="CHEBI:15378"/>
        <dbReference type="ChEBI" id="CHEBI:43474"/>
        <dbReference type="ChEBI" id="CHEBI:58043"/>
        <dbReference type="ChEBI" id="CHEBI:61557"/>
        <dbReference type="EC" id="3.6.1.5"/>
    </reaction>
</comment>
<comment type="cofactor">
    <cofactor evidence="6">
        <name>a divalent metal cation</name>
        <dbReference type="ChEBI" id="CHEBI:60240"/>
    </cofactor>
</comment>
<comment type="subunit">
    <text evidence="6">Interacts with human PLAT; the interaction results in PLAT activation probably via an allosteric activation mechanism.</text>
</comment>
<comment type="subcellular location">
    <subcellularLocation>
        <location evidence="6">Secreted</location>
    </subcellularLocation>
</comment>
<comment type="tissue specificity">
    <text evidence="6">Saliva (at protein level) (PubMed:39294191). Salivary gland (at protein level) (PubMed:39294191). Not detected in midgut (PubMed:39294191).</text>
</comment>
<comment type="developmental stage">
    <text evidence="5">Expressed in adult females (PubMed:10801886). Low-level expression in adult males (PubMed:10801886). Expressed at different larval stages (PubMed:10801886). Low-level expression in early pupae (PubMed:10801886). Not detected in late pupae (PubMed:10801886).</text>
</comment>
<comment type="induction">
    <text evidence="5">Up-regulated after blood-feeding.</text>
</comment>
<comment type="miscellaneous">
    <text evidence="6">Protein is mixed with the host blood and ingested by mosquito during blood feeding (PubMed:39294191). A reduction in both Plasmodium berghei oocyst intensity and infection prevalence is observed in mosquitoes that feed on mice immunized with the protein prior to infection with P.berghei parasites (PubMed:39294191). Immunization of mice with the protein reduces P.berghei sporozoite infectivity in the mouse skin after mosquito bite (PubMed:39294191).</text>
</comment>
<comment type="similarity">
    <text evidence="4">Belongs to the 5'-nucleotidase family.</text>
</comment>
<evidence type="ECO:0000250" key="1">
    <source>
        <dbReference type="UniProtKB" id="P21589"/>
    </source>
</evidence>
<evidence type="ECO:0000255" key="2"/>
<evidence type="ECO:0000255" key="3">
    <source>
        <dbReference type="PROSITE-ProRule" id="PRU00498"/>
    </source>
</evidence>
<evidence type="ECO:0000255" key="4">
    <source>
        <dbReference type="RuleBase" id="RU362119"/>
    </source>
</evidence>
<evidence type="ECO:0000269" key="5">
    <source>
    </source>
</evidence>
<evidence type="ECO:0000269" key="6">
    <source>
    </source>
</evidence>
<evidence type="ECO:0000303" key="7">
    <source>
    </source>
</evidence>
<evidence type="ECO:0000303" key="8">
    <source>
    </source>
</evidence>
<evidence type="ECO:0000305" key="9"/>
<evidence type="ECO:0000312" key="10">
    <source>
        <dbReference type="EMBL" id="CAB40347.1"/>
    </source>
</evidence>
<evidence type="ECO:0000312" key="11">
    <source>
        <dbReference type="EMBL" id="EAA05427.2"/>
    </source>
</evidence>
<evidence type="ECO:0000312" key="12">
    <source>
        <dbReference type="Proteomes" id="UP000007062"/>
    </source>
</evidence>
<gene>
    <name evidence="11" type="ORF">AgaP_AGAP011026</name>
</gene>
<sequence length="570" mass="63475">MALVRFATIITVLCHLAIQDGAAKSFPHGEKAPFPLTLIHINDLHARFDETNQKSSTCTNSKECIAGIARVYHTIKQLKSEYKTKNPLYLNAGDNFQGTLWYNLLRWNVTAYFIKELPPDAMTLGNHEFDHSPKGLAPYLAELEKMKIPTVVANLEKNGEPALKDSKIARSIVLKVGNRKVGVIGALYDKTHLVAQTGMVTLTNSIEAVRKEAQELKKKNVNIIVVLSHCGLDGDKQLAEEAGDLIDVIVGAHSHSLLLNKDAKVPYDTKYDTIEGDYPLVVKKSNNHTVLITQARSFGKYVGRLTVNFDCEGEVQSWEGYPIYMNNSVKQDEEVLRELEPWRAEVKRLGTQVIGTTEVFLDRESCRWCECTLGDLIADAYADQYTNSTVQPVAFVQAGNFRNPIEKGDITNGLAIEAAPYGSSVDMIKLSGADLWSAIDHSFTLDDEFRYNTAQVSGMAVVADLSKKPYERVQSIDIVGANGAKTALKKDQIYYVVVPSYLADGKDGFAMLKKGTNRVTGPLDSDVLIEYVRKRQTIAKTMFQEKRVVIENHTNGTCSWDLDSQRYKPK</sequence>
<protein>
    <recommendedName>
        <fullName evidence="8">Apyrase</fullName>
        <shortName evidence="8">AgApy</shortName>
        <ecNumber evidence="6">3.6.1.5</ecNumber>
    </recommendedName>
    <alternativeName>
        <fullName evidence="8">5' nucleotidase ecto</fullName>
        <shortName evidence="8">Ag5'NTE</shortName>
    </alternativeName>
    <alternativeName>
        <fullName evidence="7">Apyrase-like 1</fullName>
        <shortName evidence="7">AgApyL1</shortName>
    </alternativeName>
</protein>
<keyword id="KW-1203">Blood coagulation cascade inhibiting toxin</keyword>
<keyword id="KW-0325">Glycoprotein</keyword>
<keyword id="KW-1199">Hemostasis impairing toxin</keyword>
<keyword id="KW-0378">Hydrolase</keyword>
<keyword id="KW-0479">Metal-binding</keyword>
<keyword id="KW-0547">Nucleotide-binding</keyword>
<keyword id="KW-1201">Platelet aggregation inhibiting toxin</keyword>
<keyword id="KW-1185">Reference proteome</keyword>
<keyword id="KW-0964">Secreted</keyword>
<keyword id="KW-0732">Signal</keyword>
<keyword id="KW-0800">Toxin</keyword>
<accession>Q5TVM9</accession>
<accession>Q9UB34</accession>
<feature type="signal peptide" evidence="2">
    <location>
        <begin position="1"/>
        <end position="23"/>
    </location>
</feature>
<feature type="chain" id="PRO_5014486726" description="Apyrase" evidence="2">
    <location>
        <begin position="24"/>
        <end position="570"/>
    </location>
</feature>
<feature type="binding site" evidence="1">
    <location>
        <position position="43"/>
    </location>
    <ligand>
        <name>a divalent metal cation</name>
        <dbReference type="ChEBI" id="CHEBI:60240"/>
        <label>1</label>
    </ligand>
</feature>
<feature type="binding site" evidence="1">
    <location>
        <position position="43"/>
    </location>
    <ligand>
        <name>a divalent metal cation</name>
        <dbReference type="ChEBI" id="CHEBI:60240"/>
        <label>2</label>
    </ligand>
</feature>
<feature type="binding site" evidence="1">
    <location>
        <position position="45"/>
    </location>
    <ligand>
        <name>a divalent metal cation</name>
        <dbReference type="ChEBI" id="CHEBI:60240"/>
        <label>1</label>
    </ligand>
</feature>
<feature type="binding site" evidence="1">
    <location>
        <position position="94"/>
    </location>
    <ligand>
        <name>a divalent metal cation</name>
        <dbReference type="ChEBI" id="CHEBI:60240"/>
        <label>1</label>
    </ligand>
</feature>
<feature type="binding site" evidence="1">
    <location>
        <position position="94"/>
    </location>
    <ligand>
        <name>a divalent metal cation</name>
        <dbReference type="ChEBI" id="CHEBI:60240"/>
        <label>2</label>
    </ligand>
</feature>
<feature type="binding site" evidence="1">
    <location>
        <position position="126"/>
    </location>
    <ligand>
        <name>a divalent metal cation</name>
        <dbReference type="ChEBI" id="CHEBI:60240"/>
        <label>2</label>
    </ligand>
</feature>
<feature type="binding site" evidence="1">
    <location>
        <position position="229"/>
    </location>
    <ligand>
        <name>a divalent metal cation</name>
        <dbReference type="ChEBI" id="CHEBI:60240"/>
        <label>2</label>
    </ligand>
</feature>
<feature type="binding site" evidence="1">
    <location>
        <position position="253"/>
    </location>
    <ligand>
        <name>a divalent metal cation</name>
        <dbReference type="ChEBI" id="CHEBI:60240"/>
        <label>2</label>
    </ligand>
</feature>
<feature type="binding site" evidence="1">
    <location>
        <position position="367"/>
    </location>
    <ligand>
        <name>AMP</name>
        <dbReference type="ChEBI" id="CHEBI:456215"/>
    </ligand>
</feature>
<feature type="binding site" evidence="1">
    <location>
        <position position="402"/>
    </location>
    <ligand>
        <name>AMP</name>
        <dbReference type="ChEBI" id="CHEBI:456215"/>
    </ligand>
</feature>
<feature type="binding site" evidence="1">
    <location>
        <position position="507"/>
    </location>
    <ligand>
        <name>AMP</name>
        <dbReference type="ChEBI" id="CHEBI:456215"/>
    </ligand>
</feature>
<feature type="site" description="Transition state stabilizer" evidence="1">
    <location>
        <position position="127"/>
    </location>
</feature>
<feature type="site" description="Transition state stabilizer" evidence="1">
    <location>
        <position position="130"/>
    </location>
</feature>
<feature type="glycosylation site" description="N-linked (GlcNAc...) asparagine" evidence="3">
    <location>
        <position position="108"/>
    </location>
</feature>
<feature type="glycosylation site" description="N-linked (GlcNAc...) asparagine" evidence="3">
    <location>
        <position position="287"/>
    </location>
</feature>
<feature type="glycosylation site" description="N-linked (GlcNAc...) asparagine" evidence="3">
    <location>
        <position position="326"/>
    </location>
</feature>
<feature type="glycosylation site" description="N-linked (GlcNAc...) asparagine" evidence="3">
    <location>
        <position position="387"/>
    </location>
</feature>
<feature type="glycosylation site" description="N-linked (GlcNAc...) asparagine" evidence="3">
    <location>
        <position position="552"/>
    </location>
</feature>
<feature type="glycosylation site" description="N-linked (GlcNAc...) asparagine" evidence="3">
    <location>
        <position position="555"/>
    </location>
</feature>
<feature type="sequence conflict" description="In Ref. 1; CAB40347." evidence="9" ref="1">
    <original>RS</original>
    <variation>PQ</variation>
    <location>
        <begin position="170"/>
        <end position="171"/>
    </location>
</feature>
<feature type="sequence conflict" description="In Ref. 1; CAB40347." evidence="9" ref="1">
    <original>A</original>
    <variation>T</variation>
    <location>
        <position position="460"/>
    </location>
</feature>
<feature type="sequence conflict" description="In Ref. 1; CAB40347." evidence="9" ref="1">
    <original>V</original>
    <variation>A</variation>
    <location>
        <position position="497"/>
    </location>
</feature>
<proteinExistence type="evidence at protein level"/>
<name>APY_ANOGA</name>
<reference evidence="10" key="1">
    <citation type="journal article" date="2000" name="J. Biol. Chem.">
        <title>Promoter sequences of the putative Anopheles gambiae apyrase confer salivary gland expression in Drosophila melanogaster.</title>
        <authorList>
            <person name="Lombardo F."/>
            <person name="Di Cristina M."/>
            <person name="Spanos L."/>
            <person name="Louis C."/>
            <person name="Coluzzi M."/>
            <person name="Arca B."/>
        </authorList>
    </citation>
    <scope>NUCLEOTIDE SEQUENCE [MRNA]</scope>
    <scope>DEVELOPMENTAL STAGE</scope>
    <scope>INDUCTION BY BLOOD FEEDING</scope>
    <source>
        <strain evidence="10">Gasua</strain>
        <tissue evidence="10">Thorax</tissue>
    </source>
</reference>
<reference evidence="12" key="2">
    <citation type="journal article" date="2002" name="Science">
        <title>The genome sequence of the malaria mosquito Anopheles gambiae.</title>
        <authorList>
            <person name="Holt R.A."/>
            <person name="Subramanian G.M."/>
            <person name="Halpern A."/>
            <person name="Sutton G.G."/>
            <person name="Charlab R."/>
            <person name="Nusskern D.R."/>
            <person name="Wincker P."/>
            <person name="Clark A.G."/>
            <person name="Ribeiro J.M.C."/>
            <person name="Wides R."/>
            <person name="Salzberg S.L."/>
            <person name="Loftus B.J."/>
            <person name="Yandell M.D."/>
            <person name="Majoros W.H."/>
            <person name="Rusch D.B."/>
            <person name="Lai Z."/>
            <person name="Kraft C.L."/>
            <person name="Abril J.F."/>
            <person name="Anthouard V."/>
            <person name="Arensburger P."/>
            <person name="Atkinson P.W."/>
            <person name="Baden H."/>
            <person name="de Berardinis V."/>
            <person name="Baldwin D."/>
            <person name="Benes V."/>
            <person name="Biedler J."/>
            <person name="Blass C."/>
            <person name="Bolanos R."/>
            <person name="Boscus D."/>
            <person name="Barnstead M."/>
            <person name="Cai S."/>
            <person name="Center A."/>
            <person name="Chaturverdi K."/>
            <person name="Christophides G.K."/>
            <person name="Chrystal M.A.M."/>
            <person name="Clamp M."/>
            <person name="Cravchik A."/>
            <person name="Curwen V."/>
            <person name="Dana A."/>
            <person name="Delcher A."/>
            <person name="Dew I."/>
            <person name="Evans C.A."/>
            <person name="Flanigan M."/>
            <person name="Grundschober-Freimoser A."/>
            <person name="Friedli L."/>
            <person name="Gu Z."/>
            <person name="Guan P."/>
            <person name="Guigo R."/>
            <person name="Hillenmeyer M.E."/>
            <person name="Hladun S.L."/>
            <person name="Hogan J.R."/>
            <person name="Hong Y.S."/>
            <person name="Hoover J."/>
            <person name="Jaillon O."/>
            <person name="Ke Z."/>
            <person name="Kodira C.D."/>
            <person name="Kokoza E."/>
            <person name="Koutsos A."/>
            <person name="Letunic I."/>
            <person name="Levitsky A.A."/>
            <person name="Liang Y."/>
            <person name="Lin J.-J."/>
            <person name="Lobo N.F."/>
            <person name="Lopez J.R."/>
            <person name="Malek J.A."/>
            <person name="McIntosh T.C."/>
            <person name="Meister S."/>
            <person name="Miller J.R."/>
            <person name="Mobarry C."/>
            <person name="Mongin E."/>
            <person name="Murphy S.D."/>
            <person name="O'Brochta D.A."/>
            <person name="Pfannkoch C."/>
            <person name="Qi R."/>
            <person name="Regier M.A."/>
            <person name="Remington K."/>
            <person name="Shao H."/>
            <person name="Sharakhova M.V."/>
            <person name="Sitter C.D."/>
            <person name="Shetty J."/>
            <person name="Smith T.J."/>
            <person name="Strong R."/>
            <person name="Sun J."/>
            <person name="Thomasova D."/>
            <person name="Ton L.Q."/>
            <person name="Topalis P."/>
            <person name="Tu Z.J."/>
            <person name="Unger M.F."/>
            <person name="Walenz B."/>
            <person name="Wang A.H."/>
            <person name="Wang J."/>
            <person name="Wang M."/>
            <person name="Wang X."/>
            <person name="Woodford K.J."/>
            <person name="Wortman J.R."/>
            <person name="Wu M."/>
            <person name="Yao A."/>
            <person name="Zdobnov E.M."/>
            <person name="Zhang H."/>
            <person name="Zhao Q."/>
            <person name="Zhao S."/>
            <person name="Zhu S.C."/>
            <person name="Zhimulev I."/>
            <person name="Coluzzi M."/>
            <person name="della Torre A."/>
            <person name="Roth C.W."/>
            <person name="Louis C."/>
            <person name="Kalush F."/>
            <person name="Mural R.J."/>
            <person name="Myers E.W."/>
            <person name="Adams M.D."/>
            <person name="Smith H.O."/>
            <person name="Broder S."/>
            <person name="Gardner M.J."/>
            <person name="Fraser C.M."/>
            <person name="Birney E."/>
            <person name="Bork P."/>
            <person name="Brey P.T."/>
            <person name="Venter J.C."/>
            <person name="Weissenbach J."/>
            <person name="Kafatos F.C."/>
            <person name="Collins F.H."/>
            <person name="Hoffman S.L."/>
        </authorList>
    </citation>
    <scope>NUCLEOTIDE SEQUENCE [LARGE SCALE GENOMIC DNA]</scope>
    <source>
        <strain evidence="12">PEST</strain>
    </source>
</reference>
<reference evidence="11" key="3">
    <citation type="journal article" date="2004" name="Trends Parasitol.">
        <title>The Anopheles gambiae genome: an update.</title>
        <authorList>
            <person name="Mongin E."/>
            <person name="Louis C."/>
            <person name="Holt R.A."/>
            <person name="Birney E."/>
            <person name="Collins F.H."/>
        </authorList>
    </citation>
    <scope>NUCLEOTIDE SEQUENCE [LARGE SCALE GENOMIC DNA]</scope>
    <source>
        <strain evidence="11">PEST</strain>
    </source>
</reference>
<reference evidence="11" key="4">
    <citation type="journal article" date="2007" name="Genome Biol.">
        <title>Update of the Anopheles gambiae PEST genome assembly.</title>
        <authorList>
            <person name="Sharakhova M.V."/>
            <person name="Hammond M.P."/>
            <person name="Lobo N.F."/>
            <person name="Krzywinski J."/>
            <person name="Unger M.F."/>
            <person name="Hillenmeyer M.E."/>
            <person name="Bruggner R.V."/>
            <person name="Birney E."/>
            <person name="Collins F.H."/>
        </authorList>
    </citation>
    <scope>NUCLEOTIDE SEQUENCE [LARGE SCALE GENOMIC DNA]</scope>
    <source>
        <strain evidence="11">PEST</strain>
    </source>
</reference>
<reference evidence="9" key="5">
    <citation type="journal article" date="2024" name="Nat. Commun.">
        <title>Mosquito salivary apyrase regulates blood meal hemostasis and facilitates malaria parasite transmission.</title>
        <authorList>
            <person name="Pala Z.R."/>
            <person name="Alves E Silva T.L."/>
            <person name="Minai M."/>
            <person name="Crews B."/>
            <person name="Patino-Martinez E."/>
            <person name="Carmona-Rivera C."/>
            <person name="Valenzuela Leon P.C."/>
            <person name="Martin-Martin I."/>
            <person name="Flores-Garcia Y."/>
            <person name="Cachau R.E."/>
            <person name="Muslinkina L."/>
            <person name="Gittis A.G."/>
            <person name="Srivastava N."/>
            <person name="Garboczi D.N."/>
            <person name="Alves D.A."/>
            <person name="Kaplan M.J."/>
            <person name="Fischer E."/>
            <person name="Calvo E."/>
            <person name="Vega-Rodriguez J."/>
        </authorList>
    </citation>
    <scope>IDENTIFICATION BY MASS SPECTROMETRY</scope>
    <scope>FUNCTION</scope>
    <scope>FUNCTION (MICROBIAL INFECTION)</scope>
    <scope>CATALYTIC ACTIVITY</scope>
    <scope>COFACTOR</scope>
    <scope>INTERACTION WITH HUMAN PLAT</scope>
    <scope>SUBCELLULAR LOCATION</scope>
    <scope>TISSUE SPECIFICITY</scope>
</reference>
<dbReference type="EC" id="3.6.1.5" evidence="6"/>
<dbReference type="EMBL" id="AJ237706">
    <property type="protein sequence ID" value="CAB40347.1"/>
    <property type="molecule type" value="mRNA"/>
</dbReference>
<dbReference type="EMBL" id="AAAB01008823">
    <property type="protein sequence ID" value="EAA05427.2"/>
    <property type="molecule type" value="Genomic_DNA"/>
</dbReference>
<dbReference type="RefSeq" id="XP_309695.2">
    <property type="nucleotide sequence ID" value="XM_309695.3"/>
</dbReference>
<dbReference type="SMR" id="Q5TVM9"/>
<dbReference type="STRING" id="7165.Q5TVM9"/>
<dbReference type="PaxDb" id="7165-AGAP011026-PA"/>
<dbReference type="EnsemblMetazoa" id="AGAP011026-RA">
    <property type="protein sequence ID" value="AGAP011026-PA"/>
    <property type="gene ID" value="AGAP011026"/>
</dbReference>
<dbReference type="KEGG" id="aga:1270958"/>
<dbReference type="VEuPathDB" id="VectorBase:AGAMI1_012719"/>
<dbReference type="VEuPathDB" id="VectorBase:AGAP011026"/>
<dbReference type="eggNOG" id="KOG4419">
    <property type="taxonomic scope" value="Eukaryota"/>
</dbReference>
<dbReference type="HOGENOM" id="CLU_005854_7_1_1"/>
<dbReference type="OMA" id="RESCRWC"/>
<dbReference type="Proteomes" id="UP000007062">
    <property type="component" value="Chromosome 3L"/>
</dbReference>
<dbReference type="GO" id="GO:0005615">
    <property type="term" value="C:extracellular space"/>
    <property type="evidence" value="ECO:0000314"/>
    <property type="project" value="UniProtKB"/>
</dbReference>
<dbReference type="GO" id="GO:0005886">
    <property type="term" value="C:plasma membrane"/>
    <property type="evidence" value="ECO:0000318"/>
    <property type="project" value="GO_Central"/>
</dbReference>
<dbReference type="GO" id="GO:0008253">
    <property type="term" value="F:5'-nucleotidase activity"/>
    <property type="evidence" value="ECO:0000318"/>
    <property type="project" value="GO_Central"/>
</dbReference>
<dbReference type="GO" id="GO:0004050">
    <property type="term" value="F:apyrase activity"/>
    <property type="evidence" value="ECO:0000314"/>
    <property type="project" value="UniProtKB"/>
</dbReference>
<dbReference type="GO" id="GO:0008047">
    <property type="term" value="F:enzyme activator activity"/>
    <property type="evidence" value="ECO:0000314"/>
    <property type="project" value="UniProtKB"/>
</dbReference>
<dbReference type="GO" id="GO:0046872">
    <property type="term" value="F:metal ion binding"/>
    <property type="evidence" value="ECO:0007669"/>
    <property type="project" value="UniProtKB-KW"/>
</dbReference>
<dbReference type="GO" id="GO:0000166">
    <property type="term" value="F:nucleotide binding"/>
    <property type="evidence" value="ECO:0007669"/>
    <property type="project" value="UniProtKB-KW"/>
</dbReference>
<dbReference type="GO" id="GO:0090729">
    <property type="term" value="F:toxin activity"/>
    <property type="evidence" value="ECO:0007669"/>
    <property type="project" value="UniProtKB-KW"/>
</dbReference>
<dbReference type="GO" id="GO:0006196">
    <property type="term" value="P:AMP catabolic process"/>
    <property type="evidence" value="ECO:0000318"/>
    <property type="project" value="GO_Central"/>
</dbReference>
<dbReference type="GO" id="GO:0022600">
    <property type="term" value="P:digestive system process"/>
    <property type="evidence" value="ECO:0000314"/>
    <property type="project" value="UniProtKB"/>
</dbReference>
<dbReference type="GO" id="GO:0051851">
    <property type="term" value="P:host-mediated perturbation of symbiont process"/>
    <property type="evidence" value="ECO:0000314"/>
    <property type="project" value="UniProtKB"/>
</dbReference>
<dbReference type="GO" id="GO:0035821">
    <property type="term" value="P:modulation of process of another organism"/>
    <property type="evidence" value="ECO:0000314"/>
    <property type="project" value="UniProtKB"/>
</dbReference>
<dbReference type="GO" id="GO:0035893">
    <property type="term" value="P:suppression of platelet aggregation in another organism"/>
    <property type="evidence" value="ECO:0000314"/>
    <property type="project" value="UniProtKB"/>
</dbReference>
<dbReference type="GO" id="GO:0044484">
    <property type="term" value="P:venom-mediated fibrinolysis"/>
    <property type="evidence" value="ECO:0000314"/>
    <property type="project" value="UniProtKB"/>
</dbReference>
<dbReference type="CDD" id="cd07409">
    <property type="entry name" value="MPP_CD73_N"/>
    <property type="match status" value="1"/>
</dbReference>
<dbReference type="FunFam" id="3.60.21.10:FF:000020">
    <property type="entry name" value="NT5E isoform 4"/>
    <property type="match status" value="1"/>
</dbReference>
<dbReference type="FunFam" id="3.90.780.10:FF:000004">
    <property type="entry name" value="UDP-sugar hydrolase, putative"/>
    <property type="match status" value="1"/>
</dbReference>
<dbReference type="Gene3D" id="3.60.21.10">
    <property type="match status" value="1"/>
</dbReference>
<dbReference type="Gene3D" id="3.90.780.10">
    <property type="entry name" value="5'-Nucleotidase, C-terminal domain"/>
    <property type="match status" value="1"/>
</dbReference>
<dbReference type="InterPro" id="IPR008334">
    <property type="entry name" value="5'-Nucleotdase_C"/>
</dbReference>
<dbReference type="InterPro" id="IPR036907">
    <property type="entry name" value="5'-Nucleotdase_C_sf"/>
</dbReference>
<dbReference type="InterPro" id="IPR006146">
    <property type="entry name" value="5'-Nucleotdase_CS"/>
</dbReference>
<dbReference type="InterPro" id="IPR006179">
    <property type="entry name" value="5_nucleotidase/apyrase"/>
</dbReference>
<dbReference type="InterPro" id="IPR004843">
    <property type="entry name" value="Calcineurin-like_PHP_ApaH"/>
</dbReference>
<dbReference type="InterPro" id="IPR029052">
    <property type="entry name" value="Metallo-depent_PP-like"/>
</dbReference>
<dbReference type="PANTHER" id="PTHR11575">
    <property type="entry name" value="5'-NUCLEOTIDASE-RELATED"/>
    <property type="match status" value="1"/>
</dbReference>
<dbReference type="PANTHER" id="PTHR11575:SF32">
    <property type="entry name" value="APYRASE-LIKE PROTEIN"/>
    <property type="match status" value="1"/>
</dbReference>
<dbReference type="Pfam" id="PF02872">
    <property type="entry name" value="5_nucleotid_C"/>
    <property type="match status" value="1"/>
</dbReference>
<dbReference type="Pfam" id="PF00149">
    <property type="entry name" value="Metallophos"/>
    <property type="match status" value="1"/>
</dbReference>
<dbReference type="PRINTS" id="PR01607">
    <property type="entry name" value="APYRASEFAMLY"/>
</dbReference>
<dbReference type="SUPFAM" id="SSF55816">
    <property type="entry name" value="5'-nucleotidase (syn. UDP-sugar hydrolase), C-terminal domain"/>
    <property type="match status" value="1"/>
</dbReference>
<dbReference type="SUPFAM" id="SSF56300">
    <property type="entry name" value="Metallo-dependent phosphatases"/>
    <property type="match status" value="1"/>
</dbReference>
<dbReference type="PROSITE" id="PS00785">
    <property type="entry name" value="5_NUCLEOTIDASE_1"/>
    <property type="match status" value="1"/>
</dbReference>
<dbReference type="PROSITE" id="PS00786">
    <property type="entry name" value="5_NUCLEOTIDASE_2"/>
    <property type="match status" value="1"/>
</dbReference>